<dbReference type="EC" id="2.3.1.-"/>
<dbReference type="EMBL" id="BA000017">
    <property type="protein sequence ID" value="BAB56738.1"/>
    <property type="molecule type" value="Genomic_DNA"/>
</dbReference>
<dbReference type="RefSeq" id="WP_001070676.1">
    <property type="nucleotide sequence ID" value="NC_002758.2"/>
</dbReference>
<dbReference type="SMR" id="Q7A2W9"/>
<dbReference type="KEGG" id="sav:SAV0576"/>
<dbReference type="HOGENOM" id="CLU_031026_2_1_9"/>
<dbReference type="PhylomeDB" id="Q7A2W9"/>
<dbReference type="Proteomes" id="UP000002481">
    <property type="component" value="Chromosome"/>
</dbReference>
<dbReference type="GO" id="GO:0005737">
    <property type="term" value="C:cytoplasm"/>
    <property type="evidence" value="ECO:0007669"/>
    <property type="project" value="UniProtKB-ARBA"/>
</dbReference>
<dbReference type="GO" id="GO:0003988">
    <property type="term" value="F:acetyl-CoA C-acyltransferase activity"/>
    <property type="evidence" value="ECO:0007669"/>
    <property type="project" value="TreeGrafter"/>
</dbReference>
<dbReference type="GO" id="GO:0006635">
    <property type="term" value="P:fatty acid beta-oxidation"/>
    <property type="evidence" value="ECO:0007669"/>
    <property type="project" value="TreeGrafter"/>
</dbReference>
<dbReference type="GO" id="GO:0010124">
    <property type="term" value="P:phenylacetate catabolic process"/>
    <property type="evidence" value="ECO:0007669"/>
    <property type="project" value="TreeGrafter"/>
</dbReference>
<dbReference type="CDD" id="cd00751">
    <property type="entry name" value="thiolase"/>
    <property type="match status" value="1"/>
</dbReference>
<dbReference type="Gene3D" id="3.40.47.10">
    <property type="match status" value="2"/>
</dbReference>
<dbReference type="InterPro" id="IPR002155">
    <property type="entry name" value="Thiolase"/>
</dbReference>
<dbReference type="InterPro" id="IPR016039">
    <property type="entry name" value="Thiolase-like"/>
</dbReference>
<dbReference type="InterPro" id="IPR050215">
    <property type="entry name" value="Thiolase-like_sf_Thiolase"/>
</dbReference>
<dbReference type="InterPro" id="IPR020617">
    <property type="entry name" value="Thiolase_C"/>
</dbReference>
<dbReference type="InterPro" id="IPR020613">
    <property type="entry name" value="Thiolase_CS"/>
</dbReference>
<dbReference type="InterPro" id="IPR020616">
    <property type="entry name" value="Thiolase_N"/>
</dbReference>
<dbReference type="NCBIfam" id="TIGR01930">
    <property type="entry name" value="AcCoA-C-Actrans"/>
    <property type="match status" value="1"/>
</dbReference>
<dbReference type="PANTHER" id="PTHR43853">
    <property type="entry name" value="3-KETOACYL-COA THIOLASE, PEROXISOMAL"/>
    <property type="match status" value="1"/>
</dbReference>
<dbReference type="PANTHER" id="PTHR43853:SF3">
    <property type="entry name" value="ACETYL-COA C-ACETYLTRANSFERASE YHFS-RELATED"/>
    <property type="match status" value="1"/>
</dbReference>
<dbReference type="Pfam" id="PF02803">
    <property type="entry name" value="Thiolase_C"/>
    <property type="match status" value="1"/>
</dbReference>
<dbReference type="Pfam" id="PF00108">
    <property type="entry name" value="Thiolase_N"/>
    <property type="match status" value="1"/>
</dbReference>
<dbReference type="PIRSF" id="PIRSF000429">
    <property type="entry name" value="Ac-CoA_Ac_transf"/>
    <property type="match status" value="1"/>
</dbReference>
<dbReference type="SUPFAM" id="SSF53901">
    <property type="entry name" value="Thiolase-like"/>
    <property type="match status" value="2"/>
</dbReference>
<dbReference type="PROSITE" id="PS00737">
    <property type="entry name" value="THIOLASE_2"/>
    <property type="match status" value="1"/>
</dbReference>
<gene>
    <name type="primary">vraB</name>
    <name type="ordered locus">SAV0576</name>
</gene>
<comment type="miscellaneous">
    <text>May contribute to vancomycin resistance.</text>
</comment>
<comment type="similarity">
    <text evidence="2">Belongs to the thiolase-like superfamily. Thiolase family.</text>
</comment>
<reference key="1">
    <citation type="journal article" date="2001" name="Lancet">
        <title>Whole genome sequencing of meticillin-resistant Staphylococcus aureus.</title>
        <authorList>
            <person name="Kuroda M."/>
            <person name="Ohta T."/>
            <person name="Uchiyama I."/>
            <person name="Baba T."/>
            <person name="Yuzawa H."/>
            <person name="Kobayashi I."/>
            <person name="Cui L."/>
            <person name="Oguchi A."/>
            <person name="Aoki K."/>
            <person name="Nagai Y."/>
            <person name="Lian J.-Q."/>
            <person name="Ito T."/>
            <person name="Kanamori M."/>
            <person name="Matsumaru H."/>
            <person name="Maruyama A."/>
            <person name="Murakami H."/>
            <person name="Hosoyama A."/>
            <person name="Mizutani-Ui Y."/>
            <person name="Takahashi N.K."/>
            <person name="Sawano T."/>
            <person name="Inoue R."/>
            <person name="Kaito C."/>
            <person name="Sekimizu K."/>
            <person name="Hirakawa H."/>
            <person name="Kuhara S."/>
            <person name="Goto S."/>
            <person name="Yabuzaki J."/>
            <person name="Kanehisa M."/>
            <person name="Yamashita A."/>
            <person name="Oshima K."/>
            <person name="Furuya K."/>
            <person name="Yoshino C."/>
            <person name="Shiba T."/>
            <person name="Hattori M."/>
            <person name="Ogasawara N."/>
            <person name="Hayashi H."/>
            <person name="Hiramatsu K."/>
        </authorList>
    </citation>
    <scope>NUCLEOTIDE SEQUENCE [LARGE SCALE GENOMIC DNA]</scope>
    <source>
        <strain>Mu50 / ATCC 700699</strain>
    </source>
</reference>
<reference key="2">
    <citation type="journal article" date="2000" name="Biochem. Biophys. Res. Commun.">
        <title>Identification of the up- and down-regulated genes in vancomycin-resistant Staphylococcus aureus strains Mu3 and Mu50 by cDNA differential hybridization method.</title>
        <authorList>
            <person name="Kuroda M."/>
            <person name="Kuwahara-Arai K."/>
            <person name="Hiramatsu K."/>
        </authorList>
    </citation>
    <scope>VANCOMYCIN RESISTANCE</scope>
</reference>
<organism>
    <name type="scientific">Staphylococcus aureus (strain Mu50 / ATCC 700699)</name>
    <dbReference type="NCBI Taxonomy" id="158878"/>
    <lineage>
        <taxon>Bacteria</taxon>
        <taxon>Bacillati</taxon>
        <taxon>Bacillota</taxon>
        <taxon>Bacilli</taxon>
        <taxon>Bacillales</taxon>
        <taxon>Staphylococcaceae</taxon>
        <taxon>Staphylococcus</taxon>
    </lineage>
</organism>
<accession>Q7A2W9</accession>
<sequence>MNQAVIVAAKRTAFGKYGGTLKHLEPEQLLKPLFQHFKEKYPEVISKIDDVVLGNVVGNGGNIARKALLEAGLKDSIPGVTIDRQCGSGLESVQYACRMIQAGAGKVYIAGGVESTSRAPWKIKRPHSVYETALPEFYERASFAPEMSDPSMIQGAENVAKMYDVSRELQDEFAYRSHQLTAENVKNGNISQEILPITVKGEIFNTDESLKSHIPKDNFGRFKPVIKGGTVTAANSCMKNDGAVLLLIMEKDMAYELGFEHGLLFKDGVTVGVDSNFPGIGPVPAISNLLKRNQLTIENIEVIEINEAFSAQVVACQQALNISNTQLNIWGGALASGHPYGASGAQLVTRLFYMFDKETMIASMGIGGGLGNAALFTRF</sequence>
<keyword id="KW-0012">Acyltransferase</keyword>
<keyword id="KW-0808">Transferase</keyword>
<proteinExistence type="inferred from homology"/>
<name>VRAB_STAAM</name>
<feature type="chain" id="PRO_0000206427" description="Putative acetyl-CoA C-acetyltransferase VraB">
    <location>
        <begin position="1"/>
        <end position="379"/>
    </location>
</feature>
<feature type="active site" description="Acyl-thioester intermediate" evidence="1">
    <location>
        <position position="86"/>
    </location>
</feature>
<feature type="active site" description="Proton acceptor" evidence="1">
    <location>
        <position position="338"/>
    </location>
</feature>
<evidence type="ECO:0000250" key="1"/>
<evidence type="ECO:0000305" key="2"/>
<protein>
    <recommendedName>
        <fullName>Putative acetyl-CoA C-acetyltransferase VraB</fullName>
        <ecNumber>2.3.1.-</ecNumber>
    </recommendedName>
</protein>